<organism>
    <name type="scientific">Rattus norvegicus</name>
    <name type="common">Rat</name>
    <dbReference type="NCBI Taxonomy" id="10116"/>
    <lineage>
        <taxon>Eukaryota</taxon>
        <taxon>Metazoa</taxon>
        <taxon>Chordata</taxon>
        <taxon>Craniata</taxon>
        <taxon>Vertebrata</taxon>
        <taxon>Euteleostomi</taxon>
        <taxon>Mammalia</taxon>
        <taxon>Eutheria</taxon>
        <taxon>Euarchontoglires</taxon>
        <taxon>Glires</taxon>
        <taxon>Rodentia</taxon>
        <taxon>Myomorpha</taxon>
        <taxon>Muroidea</taxon>
        <taxon>Muridae</taxon>
        <taxon>Murinae</taxon>
        <taxon>Rattus</taxon>
    </lineage>
</organism>
<dbReference type="EC" id="3.1.1.116" evidence="2"/>
<dbReference type="EMBL" id="AY275375">
    <property type="protein sequence ID" value="AAQ17117.1"/>
    <property type="molecule type" value="mRNA"/>
</dbReference>
<dbReference type="RefSeq" id="NP_001005886.1">
    <property type="nucleotide sequence ID" value="NM_001005886.2"/>
</dbReference>
<dbReference type="RefSeq" id="XP_017444750.1">
    <property type="nucleotide sequence ID" value="XM_017589261.3"/>
</dbReference>
<dbReference type="RefSeq" id="XP_038935698.1">
    <property type="nucleotide sequence ID" value="XM_039079770.2"/>
</dbReference>
<dbReference type="RefSeq" id="XP_038935700.1">
    <property type="nucleotide sequence ID" value="XM_039079772.2"/>
</dbReference>
<dbReference type="SMR" id="Q5YLM1"/>
<dbReference type="FunCoup" id="Q5YLM1">
    <property type="interactions" value="1751"/>
</dbReference>
<dbReference type="STRING" id="10116.ENSRNOP00000033416"/>
<dbReference type="ChEMBL" id="CHEMBL4523331"/>
<dbReference type="ESTHER" id="ratno-q5ylm1">
    <property type="family name" value="Lipase_3"/>
</dbReference>
<dbReference type="GlyCosmos" id="Q5YLM1">
    <property type="glycosylation" value="1 site, No reported glycans"/>
</dbReference>
<dbReference type="GlyGen" id="Q5YLM1">
    <property type="glycosylation" value="1 site"/>
</dbReference>
<dbReference type="iPTMnet" id="Q5YLM1"/>
<dbReference type="PhosphoSitePlus" id="Q5YLM1"/>
<dbReference type="SwissPalm" id="Q5YLM1"/>
<dbReference type="PaxDb" id="10116-ENSRNOP00000033416"/>
<dbReference type="Ensembl" id="ENSRNOT00000037624.3">
    <property type="protein sequence ID" value="ENSRNOP00000033416.2"/>
    <property type="gene ID" value="ENSRNOG00000027264.3"/>
</dbReference>
<dbReference type="GeneID" id="309207"/>
<dbReference type="KEGG" id="rno:309207"/>
<dbReference type="AGR" id="RGD:1359461"/>
<dbReference type="CTD" id="747"/>
<dbReference type="RGD" id="1359461">
    <property type="gene designation" value="Dagla"/>
</dbReference>
<dbReference type="eggNOG" id="KOG2088">
    <property type="taxonomic scope" value="Eukaryota"/>
</dbReference>
<dbReference type="GeneTree" id="ENSGT00940000161192"/>
<dbReference type="HOGENOM" id="CLU_008300_1_0_1"/>
<dbReference type="InParanoid" id="Q5YLM1"/>
<dbReference type="OMA" id="YCMVAPE"/>
<dbReference type="OrthoDB" id="438440at2759"/>
<dbReference type="PhylomeDB" id="Q5YLM1"/>
<dbReference type="TreeFam" id="TF312928"/>
<dbReference type="Reactome" id="R-RNO-426048">
    <property type="pathway name" value="Arachidonate production from DAG"/>
</dbReference>
<dbReference type="PRO" id="PR:Q5YLM1"/>
<dbReference type="Proteomes" id="UP000002494">
    <property type="component" value="Chromosome 1"/>
</dbReference>
<dbReference type="Bgee" id="ENSRNOG00000027264">
    <property type="expression patterns" value="Expressed in frontal cortex and 16 other cell types or tissues"/>
</dbReference>
<dbReference type="GO" id="GO:0005737">
    <property type="term" value="C:cytoplasm"/>
    <property type="evidence" value="ECO:0000318"/>
    <property type="project" value="GO_Central"/>
</dbReference>
<dbReference type="GO" id="GO:0032590">
    <property type="term" value="C:dendrite membrane"/>
    <property type="evidence" value="ECO:0000250"/>
    <property type="project" value="UniProtKB"/>
</dbReference>
<dbReference type="GO" id="GO:0032591">
    <property type="term" value="C:dendritic spine membrane"/>
    <property type="evidence" value="ECO:0000250"/>
    <property type="project" value="UniProtKB"/>
</dbReference>
<dbReference type="GO" id="GO:0031901">
    <property type="term" value="C:early endosome membrane"/>
    <property type="evidence" value="ECO:0000250"/>
    <property type="project" value="UniProtKB"/>
</dbReference>
<dbReference type="GO" id="GO:0005886">
    <property type="term" value="C:plasma membrane"/>
    <property type="evidence" value="ECO:0000266"/>
    <property type="project" value="RGD"/>
</dbReference>
<dbReference type="GO" id="GO:0098839">
    <property type="term" value="C:postsynaptic density membrane"/>
    <property type="evidence" value="ECO:0000250"/>
    <property type="project" value="UniProtKB"/>
</dbReference>
<dbReference type="GO" id="GO:0045211">
    <property type="term" value="C:postsynaptic membrane"/>
    <property type="evidence" value="ECO:0000266"/>
    <property type="project" value="RGD"/>
</dbReference>
<dbReference type="GO" id="GO:0043196">
    <property type="term" value="C:varicosity"/>
    <property type="evidence" value="ECO:0000266"/>
    <property type="project" value="RGD"/>
</dbReference>
<dbReference type="GO" id="GO:0016787">
    <property type="term" value="F:hydrolase activity"/>
    <property type="evidence" value="ECO:0000266"/>
    <property type="project" value="RGD"/>
</dbReference>
<dbReference type="GO" id="GO:0004465">
    <property type="term" value="F:lipoprotein lipase activity"/>
    <property type="evidence" value="ECO:0000318"/>
    <property type="project" value="GO_Central"/>
</dbReference>
<dbReference type="GO" id="GO:0046872">
    <property type="term" value="F:metal ion binding"/>
    <property type="evidence" value="ECO:0007669"/>
    <property type="project" value="UniProtKB-KW"/>
</dbReference>
<dbReference type="GO" id="GO:0047372">
    <property type="term" value="F:monoacylglycerol lipase activity"/>
    <property type="evidence" value="ECO:0000266"/>
    <property type="project" value="RGD"/>
</dbReference>
<dbReference type="GO" id="GO:0019369">
    <property type="term" value="P:arachidonate metabolic process"/>
    <property type="evidence" value="ECO:0000250"/>
    <property type="project" value="UniProtKB"/>
</dbReference>
<dbReference type="GO" id="GO:1901696">
    <property type="term" value="P:cannabinoid biosynthetic process"/>
    <property type="evidence" value="ECO:0000266"/>
    <property type="project" value="RGD"/>
</dbReference>
<dbReference type="GO" id="GO:0046340">
    <property type="term" value="P:diacylglycerol catabolic process"/>
    <property type="evidence" value="ECO:0000250"/>
    <property type="project" value="UniProtKB"/>
</dbReference>
<dbReference type="GO" id="GO:0071926">
    <property type="term" value="P:endocannabinoid signaling pathway"/>
    <property type="evidence" value="ECO:0000250"/>
    <property type="project" value="UniProtKB"/>
</dbReference>
<dbReference type="GO" id="GO:0006640">
    <property type="term" value="P:monoacylglycerol biosynthetic process"/>
    <property type="evidence" value="ECO:0000266"/>
    <property type="project" value="RGD"/>
</dbReference>
<dbReference type="GO" id="GO:0007405">
    <property type="term" value="P:neuroblast proliferation"/>
    <property type="evidence" value="ECO:0000250"/>
    <property type="project" value="UniProtKB"/>
</dbReference>
<dbReference type="GO" id="GO:0022008">
    <property type="term" value="P:neurogenesis"/>
    <property type="evidence" value="ECO:0000250"/>
    <property type="project" value="UniProtKB"/>
</dbReference>
<dbReference type="GO" id="GO:0150077">
    <property type="term" value="P:regulation of neuroinflammatory response"/>
    <property type="evidence" value="ECO:0000250"/>
    <property type="project" value="UniProtKB"/>
</dbReference>
<dbReference type="GO" id="GO:0098921">
    <property type="term" value="P:retrograde trans-synaptic signaling by endocannabinoid"/>
    <property type="evidence" value="ECO:0000250"/>
    <property type="project" value="UniProtKB"/>
</dbReference>
<dbReference type="CDD" id="cd00519">
    <property type="entry name" value="Lipase_3"/>
    <property type="match status" value="1"/>
</dbReference>
<dbReference type="FunFam" id="3.40.50.1820:FF:000015">
    <property type="entry name" value="Sn1-specific diacylglycerol lipase alpha"/>
    <property type="match status" value="1"/>
</dbReference>
<dbReference type="Gene3D" id="3.40.50.1820">
    <property type="entry name" value="alpha/beta hydrolase"/>
    <property type="match status" value="1"/>
</dbReference>
<dbReference type="InterPro" id="IPR029058">
    <property type="entry name" value="AB_hydrolase_fold"/>
</dbReference>
<dbReference type="InterPro" id="IPR052214">
    <property type="entry name" value="DAG_Lipase-Related"/>
</dbReference>
<dbReference type="InterPro" id="IPR002921">
    <property type="entry name" value="Fungal_lipase-type"/>
</dbReference>
<dbReference type="PANTHER" id="PTHR45792">
    <property type="entry name" value="DIACYLGLYCEROL LIPASE HOMOLOG-RELATED"/>
    <property type="match status" value="1"/>
</dbReference>
<dbReference type="PANTHER" id="PTHR45792:SF8">
    <property type="entry name" value="DIACYLGLYCEROL LIPASE-ALPHA"/>
    <property type="match status" value="1"/>
</dbReference>
<dbReference type="Pfam" id="PF01764">
    <property type="entry name" value="Lipase_3"/>
    <property type="match status" value="1"/>
</dbReference>
<dbReference type="SUPFAM" id="SSF53474">
    <property type="entry name" value="alpha/beta-Hydrolases"/>
    <property type="match status" value="1"/>
</dbReference>
<dbReference type="PROSITE" id="PS00120">
    <property type="entry name" value="LIPASE_SER"/>
    <property type="match status" value="1"/>
</dbReference>
<sequence>MPGIVVFRRRWSVGSDDLVLPAIFLFLLHTTWFVILSVVLFGLVYNPHEACSLNLVDHGRGYLGILLSCMIAEMAIIWLSMRGGILYTEPRDSMQYVLYVRLAILVIEFIYAIVGIVWLTQYYTSCNDLTAKNVTLGMVVCNWVVILSVCITVLCVFDPTGRTFVKLRATKRRQRNLRTYNLRHRLEEGQATSWSRRLKVFLCCTRTKDSQSDAYSEIAYLFAEFFRDLDIVPSDIIAGLVLLRQRQRAKRNAVLDEANNDILAFLSGMPVTRNTKYLDLKNSHEMLRYKEVCYYMLFALAAYGWPMYLMRKPTCGLCQLARSCSCCLCPARPRFAPGVTIEEDNCCGCNAIAIRRHFLDENMTAVDIVYTSCHDAVYETPFYVAVDHDKKKVVISIRGTLSPKDALTDLTGDAERLPVEGHRGTWLGHKGMVLSAEYIKKKLEQEMVLSQAFGRDLGRGTKHYGLIVVGHSLGAGTAAILSFLLRPQYPTLKCFAYSPPGGLLSEDAMEYSKEFVTAVVLGKDLVPRIGLSQLEGFRRQLLDVLQRSTKPKWRIIVGATKCIPKSELPEDQVEVTALASTRLWTHPSDLTIALSASTPLYPPGRIIHVVHNHPAEQCCCCEQEEPTYFAIWGDNKAFNEVIISPAMLHEHLPYVVMEGLNKVLENYNKGKTALLSAAKVMVSPTEVDLTPELIFQQQPLPTGPPLPTGLALELPATEHRNSSVRSKSQSEMSLEGFSEGRLLSPVAAASAARQDPVELLLLSTQERLAAELQSRRAPLATMESLSDTESLYSFDSRRSSGFRSIRGSPSLHAVLERDEGHLFYIDPAIPEENPSLSSRTELLAADSLSKHSQDTQPLEAALGSGGVTPERPPSAANDEEEAAGGSEGGGVAPRGELALHNGRLGDSPSPQVLEFAEFIDSLFNLDSKSSSFQDLYCMMVPESPTSDYTEGPKSPSQQEILLRAQFEPNLVPKPPRLFAGSAEPSSGISLSPSFPLSSSGELMDLTPTGLSSQECLATDKIRTSTPTGHGASPTKQDDLVISAR</sequence>
<proteinExistence type="evidence at protein level"/>
<accession>Q5YLM1</accession>
<gene>
    <name type="primary">Dagla</name>
    <name type="synonym">Nsddr</name>
</gene>
<protein>
    <recommendedName>
        <fullName>Diacylglycerol lipase-alpha</fullName>
        <ecNumber evidence="2">3.1.1.116</ecNumber>
    </recommendedName>
    <alternativeName>
        <fullName evidence="6">Neural stem cell-derived dendrite regulator</fullName>
    </alternativeName>
    <alternativeName>
        <fullName>Sn1-specific diacylglycerol lipase alpha</fullName>
        <shortName>DGL-alpha</shortName>
    </alternativeName>
</protein>
<reference key="1">
    <citation type="submission" date="2003-04" db="EMBL/GenBank/DDBJ databases">
        <title>NSDDR a novel tetra-spanning transmembrane protein with a unique integration pattern to the plasma membrane regulates the extension of the dendritic trees of Purkinje cells.</title>
        <authorList>
            <person name="Horiguchi S."/>
            <person name="Tashiro K."/>
            <person name="Takahashi J."/>
            <person name="Hashimoto N."/>
            <person name="Nakano I."/>
            <person name="Tsuchida Y."/>
            <person name="Hirai H."/>
            <person name="Honjo T."/>
        </authorList>
    </citation>
    <scope>NUCLEOTIDE SEQUENCE [MRNA]</scope>
    <source>
        <strain>Wistar</strain>
    </source>
</reference>
<reference key="2">
    <citation type="journal article" date="2012" name="Nat. Commun.">
        <title>Quantitative maps of protein phosphorylation sites across 14 different rat organs and tissues.</title>
        <authorList>
            <person name="Lundby A."/>
            <person name="Secher A."/>
            <person name="Lage K."/>
            <person name="Nordsborg N.B."/>
            <person name="Dmytriyev A."/>
            <person name="Lundby C."/>
            <person name="Olsen J.V."/>
        </authorList>
    </citation>
    <scope>PHOSPHORYLATION [LARGE SCALE ANALYSIS] AT SER-728; SER-733; SER-744; SER-784; SER-786; SER-808; SER-835 AND SER-849</scope>
    <scope>IDENTIFICATION BY MASS SPECTROMETRY [LARGE SCALE ANALYSIS]</scope>
</reference>
<name>DGLA_RAT</name>
<comment type="function">
    <text evidence="1">Serine hydrolase that hydrolyzes arachidonic acid-esterified diacylglycerols (DAGs) to produce the principal endocannabinoid, 2-arachidonoylglycerol (2-AG). Preferentially hydrolyzes sn-1 fatty acids from diacylglycerols (DAG) that contain arachidonic acid (AA) esterified at the sn-2 position to biosynthesize 2-AG. Has negligible activity against other lipids including monoacylglycerols and phospholipids. Plays a key role in regulating 2-AG signaling in the CNS. Controls the activity of 2-AG as a retrograde messenger at neuronal synapses. Supports axonal growth during development and adult neurogenesis. Plays a role for eCB signaling in the physiological regulation of anxiety and depressive behaviors. Also regulates neuroinflammatory responses in the brain, in particular, LPS-induced microglial activation.</text>
</comment>
<comment type="catalytic activity">
    <reaction evidence="1">
        <text>a 1,2-diacyl-sn-glycerol + H2O = a 2-acylglycerol + a fatty acid + H(+)</text>
        <dbReference type="Rhea" id="RHEA:33275"/>
        <dbReference type="ChEBI" id="CHEBI:15377"/>
        <dbReference type="ChEBI" id="CHEBI:15378"/>
        <dbReference type="ChEBI" id="CHEBI:17389"/>
        <dbReference type="ChEBI" id="CHEBI:17815"/>
        <dbReference type="ChEBI" id="CHEBI:28868"/>
        <dbReference type="EC" id="3.1.1.116"/>
    </reaction>
    <physiologicalReaction direction="left-to-right" evidence="1">
        <dbReference type="Rhea" id="RHEA:33276"/>
    </physiologicalReaction>
</comment>
<comment type="catalytic activity">
    <reaction evidence="2">
        <text>1-octadecanoyl-2-(5Z,8Z,11Z,14Z-eicosatetraenoyl)-sn-glycerol + H2O = 2-(5Z,8Z,11Z,14Z-eicosatetraenoyl)-glycerol + octadecanoate + H(+)</text>
        <dbReference type="Rhea" id="RHEA:38507"/>
        <dbReference type="ChEBI" id="CHEBI:15377"/>
        <dbReference type="ChEBI" id="CHEBI:15378"/>
        <dbReference type="ChEBI" id="CHEBI:25629"/>
        <dbReference type="ChEBI" id="CHEBI:52392"/>
        <dbReference type="ChEBI" id="CHEBI:75728"/>
    </reaction>
    <physiologicalReaction direction="left-to-right" evidence="2">
        <dbReference type="Rhea" id="RHEA:38508"/>
    </physiologicalReaction>
</comment>
<comment type="catalytic activity">
    <reaction evidence="2">
        <text>1,2-di-(9Z-octadecenoyl)-sn-glycerol + H2O = 2-(9Z-octadecenoyl)-glycerol + (9Z)-octadecenoate + H(+)</text>
        <dbReference type="Rhea" id="RHEA:38511"/>
        <dbReference type="ChEBI" id="CHEBI:15377"/>
        <dbReference type="ChEBI" id="CHEBI:15378"/>
        <dbReference type="ChEBI" id="CHEBI:30823"/>
        <dbReference type="ChEBI" id="CHEBI:52333"/>
        <dbReference type="ChEBI" id="CHEBI:73990"/>
    </reaction>
    <physiologicalReaction direction="left-to-right" evidence="2">
        <dbReference type="Rhea" id="RHEA:38512"/>
    </physiologicalReaction>
</comment>
<comment type="catalytic activity">
    <reaction evidence="2">
        <text>1-(9Z-octadecenoyl)-2-(5Z,8Z,11Z,14Z-eicosatetraenoyl)-sn-glycerol + H2O = 2-(5Z,8Z,11Z,14Z-eicosatetraenoyl)-glycerol + (9Z)-octadecenoate + H(+)</text>
        <dbReference type="Rhea" id="RHEA:38515"/>
        <dbReference type="ChEBI" id="CHEBI:15377"/>
        <dbReference type="ChEBI" id="CHEBI:15378"/>
        <dbReference type="ChEBI" id="CHEBI:30823"/>
        <dbReference type="ChEBI" id="CHEBI:52392"/>
        <dbReference type="ChEBI" id="CHEBI:75449"/>
    </reaction>
    <physiologicalReaction direction="left-to-right" evidence="2">
        <dbReference type="Rhea" id="RHEA:38516"/>
    </physiologicalReaction>
</comment>
<comment type="catalytic activity">
    <reaction evidence="2">
        <text>1-(9Z-octadecenoyl)-2-octadecanoyl-sn-glycerol + H2O = 2-octadecanoylglycerol + (9Z)-octadecenoate + H(+)</text>
        <dbReference type="Rhea" id="RHEA:38519"/>
        <dbReference type="ChEBI" id="CHEBI:15377"/>
        <dbReference type="ChEBI" id="CHEBI:15378"/>
        <dbReference type="ChEBI" id="CHEBI:30823"/>
        <dbReference type="ChEBI" id="CHEBI:75448"/>
        <dbReference type="ChEBI" id="CHEBI:75456"/>
    </reaction>
    <physiologicalReaction direction="left-to-right" evidence="2">
        <dbReference type="Rhea" id="RHEA:38520"/>
    </physiologicalReaction>
</comment>
<comment type="catalytic activity">
    <reaction evidence="2">
        <text>1-(9Z-octadecenoyl)-2-(9Z,12Z-octadecadienoyl)-sn-glycerol + H2O = 2-(9Z,12Z-octadecadienoyl)-glycerol + (9Z)-octadecenoate + H(+)</text>
        <dbReference type="Rhea" id="RHEA:38523"/>
        <dbReference type="ChEBI" id="CHEBI:15377"/>
        <dbReference type="ChEBI" id="CHEBI:15378"/>
        <dbReference type="ChEBI" id="CHEBI:30823"/>
        <dbReference type="ChEBI" id="CHEBI:75450"/>
        <dbReference type="ChEBI" id="CHEBI:75457"/>
    </reaction>
    <physiologicalReaction direction="left-to-right" evidence="2">
        <dbReference type="Rhea" id="RHEA:38524"/>
    </physiologicalReaction>
</comment>
<comment type="catalytic activity">
    <reaction evidence="2">
        <text>1-(9Z-octadecenoyl)-2-O-(5Z,8Z,11Z,14Z-eicosatetraenyl)-sn-glycerol + H2O = 2-O-(5Z,8Z,11Z,14Z)-eicosatetraenylglycerol + (9Z)-octadecenoate + H(+)</text>
        <dbReference type="Rhea" id="RHEA:38527"/>
        <dbReference type="ChEBI" id="CHEBI:15377"/>
        <dbReference type="ChEBI" id="CHEBI:15378"/>
        <dbReference type="ChEBI" id="CHEBI:30823"/>
        <dbReference type="ChEBI" id="CHEBI:75913"/>
        <dbReference type="ChEBI" id="CHEBI:75914"/>
    </reaction>
    <physiologicalReaction direction="left-to-right" evidence="2">
        <dbReference type="Rhea" id="RHEA:38528"/>
    </physiologicalReaction>
</comment>
<comment type="cofactor">
    <cofactor evidence="2">
        <name>Ca(2+)</name>
        <dbReference type="ChEBI" id="CHEBI:29108"/>
    </cofactor>
</comment>
<comment type="activity regulation">
    <text evidence="1 2">Inhibited by 1,2,3-triazole urea covalent inhibitors KT172, DH376 and DO34 (By similarity). Inhibited by p-hydroxy-mercuri-benzoate and HgCl(2), but not to PMSF. Also inhibited by RHC80267. Diacylglycerol lipase activity is inhibited by the phosphorylation of Ser-784 and Ser-810 by CAMK2A (By similarity).</text>
</comment>
<comment type="subunit">
    <text evidence="1">Interacts (via C-terminal) with CAMK2A; leading to the phosphorylation and inhibition of DAGLA enzymatic activity. Interacts (via PPXXF motif) with HOMER1 and HOMER2; this interaction is required for DAGLA membrane localization.</text>
</comment>
<comment type="subcellular location">
    <subcellularLocation>
        <location evidence="2">Cell membrane</location>
        <topology evidence="3">Multi-pass membrane protein</topology>
    </subcellularLocation>
    <subcellularLocation>
        <location evidence="1">Cell projection</location>
        <location evidence="1">Dendritic spine membrane</location>
        <topology evidence="3">Multi-pass membrane protein</topology>
    </subcellularLocation>
    <subcellularLocation>
        <location evidence="2">Postsynaptic density membrane</location>
        <topology evidence="2">Multi-pass membrane protein</topology>
    </subcellularLocation>
    <subcellularLocation>
        <location evidence="2">Early endosome membrane</location>
        <topology evidence="3">Multi-pass membrane protein</topology>
    </subcellularLocation>
    <text evidence="2">Cycles between the cell surface and an intracellular endosomal compartment. Internalized by early endosomes via a clathrin-independent pathway before transport back to the postsynaptic membrane surface in a PKC-dependent manner.</text>
</comment>
<comment type="PTM">
    <text evidence="2">Phosphorylated at Ser-784 and Ser-810 by CAMK2A; phosphorylation by CAMK2A inhibits diacylglycerol lipase activity.</text>
</comment>
<comment type="similarity">
    <text evidence="7">Belongs to the AB hydrolase superfamily. Lipase family.</text>
</comment>
<keyword id="KW-0106">Calcium</keyword>
<keyword id="KW-1003">Cell membrane</keyword>
<keyword id="KW-0966">Cell projection</keyword>
<keyword id="KW-0967">Endosome</keyword>
<keyword id="KW-0325">Glycoprotein</keyword>
<keyword id="KW-0378">Hydrolase</keyword>
<keyword id="KW-0442">Lipid degradation</keyword>
<keyword id="KW-0443">Lipid metabolism</keyword>
<keyword id="KW-0472">Membrane</keyword>
<keyword id="KW-0479">Metal-binding</keyword>
<keyword id="KW-0597">Phosphoprotein</keyword>
<keyword id="KW-0628">Postsynaptic cell membrane</keyword>
<keyword id="KW-1185">Reference proteome</keyword>
<keyword id="KW-0770">Synapse</keyword>
<keyword id="KW-0812">Transmembrane</keyword>
<keyword id="KW-1133">Transmembrane helix</keyword>
<evidence type="ECO:0000250" key="1">
    <source>
        <dbReference type="UniProtKB" id="Q6WQJ1"/>
    </source>
</evidence>
<evidence type="ECO:0000250" key="2">
    <source>
        <dbReference type="UniProtKB" id="Q9Y4D2"/>
    </source>
</evidence>
<evidence type="ECO:0000255" key="3"/>
<evidence type="ECO:0000255" key="4">
    <source>
        <dbReference type="PROSITE-ProRule" id="PRU10037"/>
    </source>
</evidence>
<evidence type="ECO:0000256" key="5">
    <source>
        <dbReference type="SAM" id="MobiDB-lite"/>
    </source>
</evidence>
<evidence type="ECO:0000303" key="6">
    <source ref="1"/>
</evidence>
<evidence type="ECO:0000305" key="7"/>
<evidence type="ECO:0007744" key="8">
    <source>
    </source>
</evidence>
<feature type="chain" id="PRO_0000248349" description="Diacylglycerol lipase-alpha">
    <location>
        <begin position="1"/>
        <end position="1044"/>
    </location>
</feature>
<feature type="topological domain" description="Cytoplasmic" evidence="3">
    <location>
        <begin position="1"/>
        <end position="22"/>
    </location>
</feature>
<feature type="transmembrane region" description="Helical" evidence="3">
    <location>
        <begin position="23"/>
        <end position="43"/>
    </location>
</feature>
<feature type="topological domain" description="Extracellular" evidence="3">
    <location>
        <begin position="44"/>
        <end position="60"/>
    </location>
</feature>
<feature type="transmembrane region" description="Helical" evidence="3">
    <location>
        <begin position="61"/>
        <end position="81"/>
    </location>
</feature>
<feature type="topological domain" description="Cytoplasmic" evidence="3">
    <location>
        <begin position="82"/>
        <end position="101"/>
    </location>
</feature>
<feature type="transmembrane region" description="Helical" evidence="3">
    <location>
        <begin position="102"/>
        <end position="122"/>
    </location>
</feature>
<feature type="topological domain" description="Extracellular" evidence="3">
    <location>
        <begin position="123"/>
        <end position="136"/>
    </location>
</feature>
<feature type="transmembrane region" description="Helical" evidence="3">
    <location>
        <begin position="137"/>
        <end position="157"/>
    </location>
</feature>
<feature type="topological domain" description="Cytoplasmic" evidence="3">
    <location>
        <begin position="158"/>
        <end position="1044"/>
    </location>
</feature>
<feature type="region of interest" description="Disordered" evidence="5">
    <location>
        <begin position="848"/>
        <end position="905"/>
    </location>
</feature>
<feature type="region of interest" description="Disordered" evidence="5">
    <location>
        <begin position="1013"/>
        <end position="1044"/>
    </location>
</feature>
<feature type="active site" description="Charge relay system" evidence="4">
    <location>
        <position position="472"/>
    </location>
</feature>
<feature type="active site" description="Charge relay system" evidence="4">
    <location>
        <position position="524"/>
    </location>
</feature>
<feature type="modified residue" description="Phosphoserine" evidence="8">
    <location>
        <position position="728"/>
    </location>
</feature>
<feature type="modified residue" description="Phosphoserine" evidence="1">
    <location>
        <position position="730"/>
    </location>
</feature>
<feature type="modified residue" description="Phosphoserine" evidence="8">
    <location>
        <position position="733"/>
    </location>
</feature>
<feature type="modified residue" description="Phosphoserine" evidence="8">
    <location>
        <position position="744"/>
    </location>
</feature>
<feature type="modified residue" description="Phosphoserine" evidence="2 8">
    <location>
        <position position="784"/>
    </location>
</feature>
<feature type="modified residue" description="Phosphoserine" evidence="8">
    <location>
        <position position="786"/>
    </location>
</feature>
<feature type="modified residue" description="Phosphoserine" evidence="8">
    <location>
        <position position="808"/>
    </location>
</feature>
<feature type="modified residue" description="Phosphoserine" evidence="2">
    <location>
        <position position="810"/>
    </location>
</feature>
<feature type="modified residue" description="Phosphoserine" evidence="8">
    <location>
        <position position="835"/>
    </location>
</feature>
<feature type="modified residue" description="Phosphoserine" evidence="8">
    <location>
        <position position="849"/>
    </location>
</feature>
<feature type="modified residue" description="Phosphoserine" evidence="1">
    <location>
        <position position="954"/>
    </location>
</feature>
<feature type="modified residue" description="Phosphothreonine" evidence="1">
    <location>
        <position position="1025"/>
    </location>
</feature>
<feature type="glycosylation site" description="N-linked (GlcNAc...) asparagine" evidence="3">
    <location>
        <position position="133"/>
    </location>
</feature>